<reference key="1">
    <citation type="journal article" date="1998" name="J. Bacteriol.">
        <title>Isolation and characterization of toluene-sensitive mutants from the toluene-resistant bacterium Pseudomonas putida GM73.</title>
        <authorList>
            <person name="Kim K."/>
            <person name="Lee S."/>
            <person name="Lee K."/>
            <person name="Lim D."/>
        </authorList>
    </citation>
    <scope>NUCLEOTIDE SEQUENCE [GENOMIC DNA]</scope>
    <scope>FUNCTION</scope>
    <source>
        <strain>GM73</strain>
    </source>
</reference>
<protein>
    <recommendedName>
        <fullName>Toluene tolerance protein ttg2D</fullName>
    </recommendedName>
</protein>
<feature type="signal peptide" evidence="2">
    <location>
        <begin position="1"/>
        <end position="22"/>
    </location>
</feature>
<feature type="chain" id="PRO_0000393006" description="Toluene tolerance protein ttg2D">
    <location>
        <begin position="23"/>
        <end position="215"/>
    </location>
</feature>
<proteinExistence type="inferred from homology"/>
<keyword id="KW-0574">Periplasm</keyword>
<keyword id="KW-0732">Signal</keyword>
<sequence length="215" mass="23652">MISILRRGLLVLLAAFPLLTVAAQTPHDVVQGTTTELLGDLKANKEQYKSNPNAFYDALNRILGPVVDADGISKSIMTVKYSRKATPEQMQRFQENFKRSLMQFYGNALLEYNNQGITVDPAKADDGKRASVGMKVTGNNGAVYPVQYTLENIGGEWKVRNVIVNGINIGKLFRDQFADAMQRNGNDLDKTIDGWAGEVAKAKQAADNSPEKTVK</sequence>
<gene>
    <name type="primary">ttg2D</name>
</gene>
<name>TTG2D_PSEPU</name>
<dbReference type="EMBL" id="AF106002">
    <property type="protein sequence ID" value="AAD17960.1"/>
    <property type="molecule type" value="Genomic_DNA"/>
</dbReference>
<dbReference type="RefSeq" id="WP_003257922.1">
    <property type="nucleotide sequence ID" value="NZ_LKKS01000110.1"/>
</dbReference>
<dbReference type="SMR" id="Q9Z3Z9"/>
<dbReference type="GO" id="GO:0042597">
    <property type="term" value="C:periplasmic space"/>
    <property type="evidence" value="ECO:0007669"/>
    <property type="project" value="UniProtKB-SubCell"/>
</dbReference>
<dbReference type="Gene3D" id="3.10.450.710">
    <property type="entry name" value="Tgt2/MlaC"/>
    <property type="match status" value="1"/>
</dbReference>
<dbReference type="InterPro" id="IPR008869">
    <property type="entry name" value="MlaC/ttg2D"/>
</dbReference>
<dbReference type="InterPro" id="IPR042245">
    <property type="entry name" value="Tgt2/MlaC_sf"/>
</dbReference>
<dbReference type="PANTHER" id="PTHR36573">
    <property type="entry name" value="INTERMEMBRANE PHOSPHOLIPID TRANSPORT SYSTEM BINDING PROTEIN MLAC"/>
    <property type="match status" value="1"/>
</dbReference>
<dbReference type="PANTHER" id="PTHR36573:SF1">
    <property type="entry name" value="INTERMEMBRANE PHOSPHOLIPID TRANSPORT SYSTEM BINDING PROTEIN MLAC"/>
    <property type="match status" value="1"/>
</dbReference>
<dbReference type="Pfam" id="PF05494">
    <property type="entry name" value="MlaC"/>
    <property type="match status" value="1"/>
</dbReference>
<dbReference type="PIRSF" id="PIRSF004649">
    <property type="entry name" value="MlaC"/>
    <property type="match status" value="1"/>
</dbReference>
<accession>Q9Z3Z9</accession>
<organism>
    <name type="scientific">Pseudomonas putida</name>
    <name type="common">Arthrobacter siderocapsulatus</name>
    <dbReference type="NCBI Taxonomy" id="303"/>
    <lineage>
        <taxon>Bacteria</taxon>
        <taxon>Pseudomonadati</taxon>
        <taxon>Pseudomonadota</taxon>
        <taxon>Gammaproteobacteria</taxon>
        <taxon>Pseudomonadales</taxon>
        <taxon>Pseudomonadaceae</taxon>
        <taxon>Pseudomonas</taxon>
    </lineage>
</organism>
<evidence type="ECO:0000250" key="1"/>
<evidence type="ECO:0000255" key="2"/>
<evidence type="ECO:0000269" key="3">
    <source>
    </source>
</evidence>
<evidence type="ECO:0000305" key="4"/>
<comment type="function">
    <text evidence="3">Plays a role in toluene resistance.</text>
</comment>
<comment type="subcellular location">
    <subcellularLocation>
        <location evidence="1">Periplasm</location>
    </subcellularLocation>
</comment>
<comment type="similarity">
    <text evidence="4">Belongs to the MlaC/ttg2D family.</text>
</comment>